<reference key="1">
    <citation type="journal article" date="1983" name="J. Virol.">
        <title>Nucleotide sequences of feline sarcoma virus long terminal repeats and 5' leaders show extensive homology to those of other mammalian retroviruses.</title>
        <authorList>
            <person name="Hampe A."/>
            <person name="Gobet M."/>
            <person name="Even J."/>
            <person name="Sherr C.J."/>
            <person name="Galibert F."/>
        </authorList>
    </citation>
    <scope>NUCLEOTIDE SEQUENCE [GENOMIC RNA] OF 1-75</scope>
</reference>
<reference key="2">
    <citation type="journal article" date="1982" name="Cell">
        <title>Nucleotide sequences of feline retroviral oncogenes (v-fes) provide evidence for a family of tyrosine-specific protein kinase genes.</title>
        <authorList>
            <person name="Hampe A."/>
            <person name="Laprevotte I."/>
            <person name="Galibert F."/>
            <person name="Fedele L.A."/>
            <person name="Sherr C.J."/>
        </authorList>
    </citation>
    <scope>NUCLEOTIDE SEQUENCE [GENOMIC RNA] OF 75-371</scope>
</reference>
<proteinExistence type="inferred from homology"/>
<name>GGAG_FSVST</name>
<feature type="chain" id="PRO_0000441134" description="Glyco-Gag protein">
    <location>
        <begin position="1"/>
        <end position="371"/>
    </location>
</feature>
<feature type="topological domain" description="Cytoplasmic" evidence="5">
    <location>
        <begin position="1"/>
        <end position="51"/>
    </location>
</feature>
<feature type="transmembrane region" description="Helical" evidence="2">
    <location>
        <begin position="52"/>
        <end position="72"/>
    </location>
</feature>
<feature type="topological domain" description="Extracellular" evidence="5">
    <location>
        <begin position="73"/>
        <end position="371"/>
    </location>
</feature>
<feature type="region of interest" description="Disordered" evidence="4">
    <location>
        <begin position="171"/>
        <end position="281"/>
    </location>
</feature>
<feature type="region of interest" description="Disordered" evidence="4">
    <location>
        <begin position="350"/>
        <end position="371"/>
    </location>
</feature>
<feature type="compositionally biased region" description="Pro residues" evidence="4">
    <location>
        <begin position="174"/>
        <end position="193"/>
    </location>
</feature>
<feature type="compositionally biased region" description="Low complexity" evidence="4">
    <location>
        <begin position="194"/>
        <end position="203"/>
    </location>
</feature>
<feature type="compositionally biased region" description="Pro residues" evidence="4">
    <location>
        <begin position="204"/>
        <end position="220"/>
    </location>
</feature>
<feature type="compositionally biased region" description="Pro residues" evidence="4">
    <location>
        <begin position="230"/>
        <end position="245"/>
    </location>
</feature>
<feature type="glycosylation site" description="N-linked (GlcNAc...) asparagine; by host" evidence="3">
    <location>
        <position position="134"/>
    </location>
</feature>
<accession>P0DOG9</accession>
<organism>
    <name type="scientific">Feline sarcoma virus (strain Snyder-Theilen)</name>
    <dbReference type="NCBI Taxonomy" id="11780"/>
    <lineage>
        <taxon>Viruses</taxon>
        <taxon>Riboviria</taxon>
        <taxon>Pararnavirae</taxon>
        <taxon>Artverviricota</taxon>
        <taxon>Revtraviricetes</taxon>
        <taxon>Ortervirales</taxon>
        <taxon>Retroviridae</taxon>
        <taxon>Orthoretrovirinae</taxon>
        <taxon>Gammaretrovirus</taxon>
    </lineage>
</organism>
<sequence>MSGASSGTAIGAHLFGVSPEYRVLIGDEGAGPSKSLSEVSFSVWYRSRAARLVILCLVASFLVPCLTFLIAEAVMGQTVTTPLSLTLDHWSEVRARAHNQGVEVRKKKWITLCKAEWVMMNVGWPREGTFSLDNISQVKKKIFAPGPHGHPDQVPYITTWRSLATDPPSWVRPFLPPPKPPTPLPQPLSPQPSAPLTSSLYPVVPKPDPPKPPVLPPDPSSPLIDLLTEEPPPYPGGHGPPPSGPRTPAASPIVSRLRERRENPAEESQALPLREGPNNRPQYWPFSASDLYNWKSHNPPFSQDPVALTNLIESILVTHQPTWDDCQQLLQALLTGEERQRVLLEARKQVPGEDGRPTQLPNVIDETFPLT</sequence>
<keyword id="KW-0024">Alternative initiation</keyword>
<keyword id="KW-0325">Glycoprotein</keyword>
<keyword id="KW-1032">Host cell membrane</keyword>
<keyword id="KW-1043">Host membrane</keyword>
<keyword id="KW-0472">Membrane</keyword>
<keyword id="KW-0812">Transmembrane</keyword>
<keyword id="KW-1133">Transmembrane helix</keyword>
<organismHost>
    <name type="scientific">Felidae</name>
    <name type="common">cat family</name>
    <dbReference type="NCBI Taxonomy" id="9681"/>
</organismHost>
<protein>
    <recommendedName>
        <fullName>Glyco-Gag protein</fullName>
    </recommendedName>
    <alternativeName>
        <fullName>Gross cell surface antigen</fullName>
    </alternativeName>
    <alternativeName>
        <fullName>glycosylated Pr80 gag</fullName>
        <shortName>gPr80 Gag</shortName>
        <shortName>gag-gPr80</shortName>
    </alternativeName>
</protein>
<evidence type="ECO:0000250" key="1">
    <source>
        <dbReference type="UniProtKB" id="P0DOG8"/>
    </source>
</evidence>
<evidence type="ECO:0000255" key="2"/>
<evidence type="ECO:0000255" key="3">
    <source>
        <dbReference type="PROSITE-ProRule" id="PRU00498"/>
    </source>
</evidence>
<evidence type="ECO:0000256" key="4">
    <source>
        <dbReference type="SAM" id="MobiDB-lite"/>
    </source>
</evidence>
<evidence type="ECO:0000305" key="5"/>
<dbReference type="EMBL" id="J02088">
    <property type="status" value="NOT_ANNOTATED_CDS"/>
    <property type="molecule type" value="Genomic_RNA"/>
</dbReference>
<dbReference type="SMR" id="P0DOG9"/>
<dbReference type="GO" id="GO:0020002">
    <property type="term" value="C:host cell plasma membrane"/>
    <property type="evidence" value="ECO:0007669"/>
    <property type="project" value="UniProtKB-SubCell"/>
</dbReference>
<dbReference type="GO" id="GO:0016020">
    <property type="term" value="C:membrane"/>
    <property type="evidence" value="ECO:0007669"/>
    <property type="project" value="UniProtKB-KW"/>
</dbReference>
<dbReference type="GO" id="GO:0019068">
    <property type="term" value="P:virion assembly"/>
    <property type="evidence" value="ECO:0007669"/>
    <property type="project" value="InterPro"/>
</dbReference>
<dbReference type="Gene3D" id="1.10.150.180">
    <property type="entry name" value="Gamma-retroviral matrix domain"/>
    <property type="match status" value="1"/>
</dbReference>
<dbReference type="Gene3D" id="1.10.375.10">
    <property type="entry name" value="Human Immunodeficiency Virus Type 1 Capsid Protein"/>
    <property type="match status" value="1"/>
</dbReference>
<dbReference type="InterPro" id="IPR000840">
    <property type="entry name" value="G_retro_matrix"/>
</dbReference>
<dbReference type="InterPro" id="IPR036946">
    <property type="entry name" value="G_retro_matrix_sf"/>
</dbReference>
<dbReference type="InterPro" id="IPR002079">
    <property type="entry name" value="Gag_p12"/>
</dbReference>
<dbReference type="InterPro" id="IPR003036">
    <property type="entry name" value="Gag_P30"/>
</dbReference>
<dbReference type="InterPro" id="IPR008919">
    <property type="entry name" value="Retrov_capsid_N"/>
</dbReference>
<dbReference type="InterPro" id="IPR050462">
    <property type="entry name" value="Retroviral_Gag-Pol_poly"/>
</dbReference>
<dbReference type="InterPro" id="IPR010999">
    <property type="entry name" value="Retrovr_matrix"/>
</dbReference>
<dbReference type="PANTHER" id="PTHR33166">
    <property type="entry name" value="GAG_P30 DOMAIN-CONTAINING PROTEIN"/>
    <property type="match status" value="1"/>
</dbReference>
<dbReference type="Pfam" id="PF01140">
    <property type="entry name" value="Gag_MA"/>
    <property type="match status" value="1"/>
</dbReference>
<dbReference type="Pfam" id="PF01141">
    <property type="entry name" value="Gag_p12"/>
    <property type="match status" value="1"/>
</dbReference>
<dbReference type="Pfam" id="PF02093">
    <property type="entry name" value="Gag_p30"/>
    <property type="match status" value="1"/>
</dbReference>
<dbReference type="SUPFAM" id="SSF47836">
    <property type="entry name" value="Retroviral matrix proteins"/>
    <property type="match status" value="1"/>
</dbReference>
<dbReference type="SUPFAM" id="SSF47943">
    <property type="entry name" value="Retrovirus capsid protein, N-terminal core domain"/>
    <property type="match status" value="1"/>
</dbReference>
<comment type="function">
    <text evidence="1">Plays a role in viral particle release. Presumably acts by facilitating the fission of the virion bud at the cell surface.</text>
</comment>
<comment type="subcellular location">
    <subcellularLocation>
        <location evidence="1 2">Host cell membrane</location>
        <topology evidence="1">Single-pass membrane protein</topology>
    </subcellularLocation>
</comment>
<comment type="alternative products">
    <event type="alternative initiation"/>
    <isoform>
        <id>P0DOG9-1</id>
        <name>Glyco-Gag protein</name>
        <sequence type="displayed"/>
    </isoform>
    <isoform>
        <id>P03338-1</id>
        <name>Gag polyprotein</name>
        <sequence type="external"/>
    </isoform>
</comment>
<comment type="PTM">
    <text evidence="1">Glycosylated by host.</text>
</comment>
<comment type="PTM">
    <text evidence="1">Cleaved by host near the middle of the molecule, releasing the c-terminal half containing capsid and nucleoprotein domains op GAG.</text>
</comment>